<feature type="chain" id="PRO_1000021061" description="Inner membrane-spanning protein YciB">
    <location>
        <begin position="1"/>
        <end position="181"/>
    </location>
</feature>
<feature type="transmembrane region" description="Helical" evidence="1">
    <location>
        <begin position="10"/>
        <end position="30"/>
    </location>
</feature>
<feature type="transmembrane region" description="Helical" evidence="1">
    <location>
        <begin position="50"/>
        <end position="70"/>
    </location>
</feature>
<feature type="transmembrane region" description="Helical" evidence="1">
    <location>
        <begin position="72"/>
        <end position="92"/>
    </location>
</feature>
<feature type="transmembrane region" description="Helical" evidence="1">
    <location>
        <begin position="118"/>
        <end position="138"/>
    </location>
</feature>
<feature type="transmembrane region" description="Helical" evidence="1">
    <location>
        <begin position="148"/>
        <end position="168"/>
    </location>
</feature>
<proteinExistence type="inferred from homology"/>
<reference key="1">
    <citation type="submission" date="2006-08" db="EMBL/GenBank/DDBJ databases">
        <title>Complete sequence of Shewanella sp. MR-4.</title>
        <authorList>
            <consortium name="US DOE Joint Genome Institute"/>
            <person name="Copeland A."/>
            <person name="Lucas S."/>
            <person name="Lapidus A."/>
            <person name="Barry K."/>
            <person name="Detter J.C."/>
            <person name="Glavina del Rio T."/>
            <person name="Hammon N."/>
            <person name="Israni S."/>
            <person name="Dalin E."/>
            <person name="Tice H."/>
            <person name="Pitluck S."/>
            <person name="Kiss H."/>
            <person name="Brettin T."/>
            <person name="Bruce D."/>
            <person name="Han C."/>
            <person name="Tapia R."/>
            <person name="Gilna P."/>
            <person name="Schmutz J."/>
            <person name="Larimer F."/>
            <person name="Land M."/>
            <person name="Hauser L."/>
            <person name="Kyrpides N."/>
            <person name="Mikhailova N."/>
            <person name="Nealson K."/>
            <person name="Konstantinidis K."/>
            <person name="Klappenbach J."/>
            <person name="Tiedje J."/>
            <person name="Richardson P."/>
        </authorList>
    </citation>
    <scope>NUCLEOTIDE SEQUENCE [LARGE SCALE GENOMIC DNA]</scope>
    <source>
        <strain>MR-4</strain>
    </source>
</reference>
<protein>
    <recommendedName>
        <fullName evidence="1">Inner membrane-spanning protein YciB</fullName>
    </recommendedName>
</protein>
<evidence type="ECO:0000255" key="1">
    <source>
        <dbReference type="HAMAP-Rule" id="MF_00189"/>
    </source>
</evidence>
<organism>
    <name type="scientific">Shewanella sp. (strain MR-4)</name>
    <dbReference type="NCBI Taxonomy" id="60480"/>
    <lineage>
        <taxon>Bacteria</taxon>
        <taxon>Pseudomonadati</taxon>
        <taxon>Pseudomonadota</taxon>
        <taxon>Gammaproteobacteria</taxon>
        <taxon>Alteromonadales</taxon>
        <taxon>Shewanellaceae</taxon>
        <taxon>Shewanella</taxon>
    </lineage>
</organism>
<keyword id="KW-0997">Cell inner membrane</keyword>
<keyword id="KW-1003">Cell membrane</keyword>
<keyword id="KW-0472">Membrane</keyword>
<keyword id="KW-0812">Transmembrane</keyword>
<keyword id="KW-1133">Transmembrane helix</keyword>
<comment type="function">
    <text evidence="1">Plays a role in cell envelope biogenesis, maintenance of cell envelope integrity and membrane homeostasis.</text>
</comment>
<comment type="subcellular location">
    <subcellularLocation>
        <location evidence="1">Cell inner membrane</location>
        <topology evidence="1">Multi-pass membrane protein</topology>
    </subcellularLocation>
</comment>
<comment type="similarity">
    <text evidence="1">Belongs to the YciB family.</text>
</comment>
<name>YCIB_SHESM</name>
<dbReference type="EMBL" id="CP000446">
    <property type="protein sequence ID" value="ABI38527.1"/>
    <property type="molecule type" value="Genomic_DNA"/>
</dbReference>
<dbReference type="RefSeq" id="WP_011622231.1">
    <property type="nucleotide sequence ID" value="NC_008321.1"/>
</dbReference>
<dbReference type="KEGG" id="she:Shewmr4_1449"/>
<dbReference type="HOGENOM" id="CLU_089554_2_0_6"/>
<dbReference type="GO" id="GO:0005886">
    <property type="term" value="C:plasma membrane"/>
    <property type="evidence" value="ECO:0007669"/>
    <property type="project" value="UniProtKB-SubCell"/>
</dbReference>
<dbReference type="HAMAP" id="MF_00189">
    <property type="entry name" value="YciB"/>
    <property type="match status" value="1"/>
</dbReference>
<dbReference type="InterPro" id="IPR006008">
    <property type="entry name" value="YciB"/>
</dbReference>
<dbReference type="NCBIfam" id="TIGR00997">
    <property type="entry name" value="ispZ"/>
    <property type="match status" value="1"/>
</dbReference>
<dbReference type="NCBIfam" id="NF001324">
    <property type="entry name" value="PRK00259.1-2"/>
    <property type="match status" value="1"/>
</dbReference>
<dbReference type="NCBIfam" id="NF001325">
    <property type="entry name" value="PRK00259.1-3"/>
    <property type="match status" value="1"/>
</dbReference>
<dbReference type="PANTHER" id="PTHR36917:SF1">
    <property type="entry name" value="INNER MEMBRANE-SPANNING PROTEIN YCIB"/>
    <property type="match status" value="1"/>
</dbReference>
<dbReference type="PANTHER" id="PTHR36917">
    <property type="entry name" value="INTRACELLULAR SEPTATION PROTEIN A-RELATED"/>
    <property type="match status" value="1"/>
</dbReference>
<dbReference type="Pfam" id="PF04279">
    <property type="entry name" value="IspA"/>
    <property type="match status" value="1"/>
</dbReference>
<gene>
    <name evidence="1" type="primary">yciB</name>
    <name type="ordered locus">Shewmr4_1449</name>
</gene>
<sequence>MKQLLDFLPLIIFFAVYKFFDIYIASGALIAATALQLVVTYALYKKLEKMHLITFAMVTVFGTLTLVFHDDAFIKWKVTIIYALFALALGVSQLLNKSILKSMLGKEMKVADKIWAHVTWYWVSFFAICGLVNIYVAFKLPLETWVNFKVFGLTALTLINTVITVFYLYKHLPEDQRKELK</sequence>
<accession>Q0HK90</accession>